<protein>
    <recommendedName>
        <fullName evidence="1">Translation initiation factor 5A</fullName>
    </recommendedName>
    <alternativeName>
        <fullName evidence="1">Hypusine-containing protein</fullName>
    </alternativeName>
    <alternativeName>
        <fullName evidence="1">eIF-5A</fullName>
    </alternativeName>
</protein>
<gene>
    <name evidence="1" type="primary">eif5a</name>
    <name type="ordered locus">Msp_1352</name>
</gene>
<proteinExistence type="inferred from homology"/>
<evidence type="ECO:0000255" key="1">
    <source>
        <dbReference type="HAMAP-Rule" id="MF_00085"/>
    </source>
</evidence>
<name>IF5A_METST</name>
<sequence length="132" mass="14284">MATKVAEIKTLKQGKYLVLGGEASKITSISTSSPGKHGAAKARIEAVGIFDNQKRSLVKPVNAKVDIPIIDKRVGQVLAIMGEEVQLMDLETYETIDLPIPEDLKGDIAEGKEVEYIEAMGNMKIMRTKGGN</sequence>
<comment type="function">
    <text evidence="1">Functions by promoting the formation of the first peptide bond.</text>
</comment>
<comment type="subcellular location">
    <subcellularLocation>
        <location evidence="1">Cytoplasm</location>
    </subcellularLocation>
</comment>
<comment type="similarity">
    <text evidence="1">Belongs to the eIF-5A family.</text>
</comment>
<accession>Q2NEM4</accession>
<dbReference type="EMBL" id="CP000102">
    <property type="protein sequence ID" value="ABC57729.1"/>
    <property type="molecule type" value="Genomic_DNA"/>
</dbReference>
<dbReference type="RefSeq" id="WP_011406928.1">
    <property type="nucleotide sequence ID" value="NC_007681.1"/>
</dbReference>
<dbReference type="SMR" id="Q2NEM4"/>
<dbReference type="STRING" id="339860.Msp_1352"/>
<dbReference type="KEGG" id="mst:Msp_1352"/>
<dbReference type="eggNOG" id="arCOG04277">
    <property type="taxonomic scope" value="Archaea"/>
</dbReference>
<dbReference type="HOGENOM" id="CLU_102600_3_0_2"/>
<dbReference type="OrthoDB" id="23689at2157"/>
<dbReference type="Proteomes" id="UP000001931">
    <property type="component" value="Chromosome"/>
</dbReference>
<dbReference type="GO" id="GO:0005737">
    <property type="term" value="C:cytoplasm"/>
    <property type="evidence" value="ECO:0007669"/>
    <property type="project" value="UniProtKB-SubCell"/>
</dbReference>
<dbReference type="GO" id="GO:0043022">
    <property type="term" value="F:ribosome binding"/>
    <property type="evidence" value="ECO:0007669"/>
    <property type="project" value="InterPro"/>
</dbReference>
<dbReference type="GO" id="GO:0003723">
    <property type="term" value="F:RNA binding"/>
    <property type="evidence" value="ECO:0007669"/>
    <property type="project" value="InterPro"/>
</dbReference>
<dbReference type="GO" id="GO:0003746">
    <property type="term" value="F:translation elongation factor activity"/>
    <property type="evidence" value="ECO:0007669"/>
    <property type="project" value="InterPro"/>
</dbReference>
<dbReference type="GO" id="GO:0003743">
    <property type="term" value="F:translation initiation factor activity"/>
    <property type="evidence" value="ECO:0007669"/>
    <property type="project" value="UniProtKB-UniRule"/>
</dbReference>
<dbReference type="GO" id="GO:0045901">
    <property type="term" value="P:positive regulation of translational elongation"/>
    <property type="evidence" value="ECO:0007669"/>
    <property type="project" value="InterPro"/>
</dbReference>
<dbReference type="GO" id="GO:0045905">
    <property type="term" value="P:positive regulation of translational termination"/>
    <property type="evidence" value="ECO:0007669"/>
    <property type="project" value="InterPro"/>
</dbReference>
<dbReference type="CDD" id="cd04467">
    <property type="entry name" value="S1_aIF5A"/>
    <property type="match status" value="1"/>
</dbReference>
<dbReference type="Gene3D" id="2.30.30.30">
    <property type="match status" value="1"/>
</dbReference>
<dbReference type="Gene3D" id="2.40.50.140">
    <property type="entry name" value="Nucleic acid-binding proteins"/>
    <property type="match status" value="1"/>
</dbReference>
<dbReference type="HAMAP" id="MF_00085">
    <property type="entry name" value="eIF_5A"/>
    <property type="match status" value="1"/>
</dbReference>
<dbReference type="InterPro" id="IPR001884">
    <property type="entry name" value="IF5A-like"/>
</dbReference>
<dbReference type="InterPro" id="IPR048670">
    <property type="entry name" value="IF5A-like_N"/>
</dbReference>
<dbReference type="InterPro" id="IPR012340">
    <property type="entry name" value="NA-bd_OB-fold"/>
</dbReference>
<dbReference type="InterPro" id="IPR014722">
    <property type="entry name" value="Rib_uL2_dom2"/>
</dbReference>
<dbReference type="InterPro" id="IPR019769">
    <property type="entry name" value="Trans_elong_IF5A_hypusine_site"/>
</dbReference>
<dbReference type="InterPro" id="IPR022847">
    <property type="entry name" value="Transl_elong_IF5A_arc"/>
</dbReference>
<dbReference type="InterPro" id="IPR020189">
    <property type="entry name" value="Transl_elong_IF5A_C"/>
</dbReference>
<dbReference type="InterPro" id="IPR008991">
    <property type="entry name" value="Translation_prot_SH3-like_sf"/>
</dbReference>
<dbReference type="NCBIfam" id="TIGR00037">
    <property type="entry name" value="eIF_5A"/>
    <property type="match status" value="1"/>
</dbReference>
<dbReference type="NCBIfam" id="NF003076">
    <property type="entry name" value="PRK03999.1"/>
    <property type="match status" value="1"/>
</dbReference>
<dbReference type="PANTHER" id="PTHR11673">
    <property type="entry name" value="TRANSLATION INITIATION FACTOR 5A FAMILY MEMBER"/>
    <property type="match status" value="1"/>
</dbReference>
<dbReference type="Pfam" id="PF01287">
    <property type="entry name" value="eIF-5a"/>
    <property type="match status" value="1"/>
</dbReference>
<dbReference type="Pfam" id="PF21485">
    <property type="entry name" value="IF5A-like_N"/>
    <property type="match status" value="1"/>
</dbReference>
<dbReference type="PIRSF" id="PIRSF003025">
    <property type="entry name" value="eIF5A"/>
    <property type="match status" value="1"/>
</dbReference>
<dbReference type="SMART" id="SM01376">
    <property type="entry name" value="eIF-5a"/>
    <property type="match status" value="1"/>
</dbReference>
<dbReference type="SUPFAM" id="SSF50249">
    <property type="entry name" value="Nucleic acid-binding proteins"/>
    <property type="match status" value="1"/>
</dbReference>
<dbReference type="SUPFAM" id="SSF50104">
    <property type="entry name" value="Translation proteins SH3-like domain"/>
    <property type="match status" value="1"/>
</dbReference>
<dbReference type="PROSITE" id="PS00302">
    <property type="entry name" value="IF5A_HYPUSINE"/>
    <property type="match status" value="1"/>
</dbReference>
<keyword id="KW-0963">Cytoplasm</keyword>
<keyword id="KW-0385">Hypusine</keyword>
<keyword id="KW-0396">Initiation factor</keyword>
<keyword id="KW-0648">Protein biosynthesis</keyword>
<keyword id="KW-1185">Reference proteome</keyword>
<reference key="1">
    <citation type="journal article" date="2006" name="J. Bacteriol.">
        <title>The genome sequence of Methanosphaera stadtmanae reveals why this human intestinal archaeon is restricted to methanol and H2 for methane formation and ATP synthesis.</title>
        <authorList>
            <person name="Fricke W.F."/>
            <person name="Seedorf H."/>
            <person name="Henne A."/>
            <person name="Kruer M."/>
            <person name="Liesegang H."/>
            <person name="Hedderich R."/>
            <person name="Gottschalk G."/>
            <person name="Thauer R.K."/>
        </authorList>
    </citation>
    <scope>NUCLEOTIDE SEQUENCE [LARGE SCALE GENOMIC DNA]</scope>
    <source>
        <strain>ATCC 43021 / DSM 3091 / JCM 11832 / MCB-3</strain>
    </source>
</reference>
<organism>
    <name type="scientific">Methanosphaera stadtmanae (strain ATCC 43021 / DSM 3091 / JCM 11832 / MCB-3)</name>
    <dbReference type="NCBI Taxonomy" id="339860"/>
    <lineage>
        <taxon>Archaea</taxon>
        <taxon>Methanobacteriati</taxon>
        <taxon>Methanobacteriota</taxon>
        <taxon>Methanomada group</taxon>
        <taxon>Methanobacteria</taxon>
        <taxon>Methanobacteriales</taxon>
        <taxon>Methanobacteriaceae</taxon>
        <taxon>Methanosphaera</taxon>
    </lineage>
</organism>
<feature type="chain" id="PRO_0000259438" description="Translation initiation factor 5A">
    <location>
        <begin position="1"/>
        <end position="132"/>
    </location>
</feature>
<feature type="modified residue" description="Hypusine" evidence="1">
    <location>
        <position position="36"/>
    </location>
</feature>